<name>CINAL_AKKM8</name>
<sequence>MKQIRVELINTGTEILLGSIVNTNAAWLGNRLFEAGFRVGRVTVVPDGYAINEAMRESARRADIVIVSGGLGPTSDDVTREALCDVCGVDMHRDEHVAEWLKSYFERRGIPIAECNFKQAMVPDGAAVLENSNGTAPGLVMPASGSLPMFILLPGPPAELKPMVEHSVMPLLEDLADEDIPHLRVFRLVGIGESDLQELVDGSLHQVEGLEVAYCARVGEVDVRLVGSEVALKQGEARLRILAGAYVLAPAGASLEKAVVCHLAQQDLKAATAESCTGGLIAKRITDVPGASGVFEFGWVTYADRAKTEMLGVPENVLKRYGAVSEPVVKAMAEGALERSGADVAVAVSGIAGPGGGTPEKPVGTVWLAWAFRGGETRTEMMLYPRDRSSFRKMVSQRALAGLLDARRKEPVTE</sequence>
<evidence type="ECO:0000255" key="1">
    <source>
        <dbReference type="HAMAP-Rule" id="MF_00226"/>
    </source>
</evidence>
<feature type="chain" id="PRO_1000100303" description="CinA-like protein">
    <location>
        <begin position="1"/>
        <end position="414"/>
    </location>
</feature>
<gene>
    <name type="ordered locus">Amuc_0430</name>
</gene>
<protein>
    <recommendedName>
        <fullName evidence="1">CinA-like protein</fullName>
    </recommendedName>
</protein>
<organism>
    <name type="scientific">Akkermansia muciniphila (strain ATCC BAA-835 / DSM 22959 / JCM 33894 / BCRC 81048 / CCUG 64013 / CIP 107961 / Muc)</name>
    <dbReference type="NCBI Taxonomy" id="349741"/>
    <lineage>
        <taxon>Bacteria</taxon>
        <taxon>Pseudomonadati</taxon>
        <taxon>Verrucomicrobiota</taxon>
        <taxon>Verrucomicrobiia</taxon>
        <taxon>Verrucomicrobiales</taxon>
        <taxon>Akkermansiaceae</taxon>
        <taxon>Akkermansia</taxon>
    </lineage>
</organism>
<reference key="1">
    <citation type="journal article" date="2011" name="PLoS ONE">
        <title>The genome of Akkermansia muciniphila, a dedicated intestinal mucin degrader, and its use in exploring intestinal metagenomes.</title>
        <authorList>
            <person name="van Passel M.W."/>
            <person name="Kant R."/>
            <person name="Zoetendal E.G."/>
            <person name="Plugge C.M."/>
            <person name="Derrien M."/>
            <person name="Malfatti S.A."/>
            <person name="Chain P.S."/>
            <person name="Woyke T."/>
            <person name="Palva A."/>
            <person name="de Vos W.M."/>
            <person name="Smidt H."/>
        </authorList>
    </citation>
    <scope>NUCLEOTIDE SEQUENCE [LARGE SCALE GENOMIC DNA]</scope>
    <source>
        <strain>ATCC BAA-835 / DSM 22959 / JCM 33894 / BCRC 81048 / CCUG 64013 / CIP 107961 / Muc</strain>
    </source>
</reference>
<proteinExistence type="inferred from homology"/>
<comment type="similarity">
    <text evidence="1">Belongs to the CinA family.</text>
</comment>
<accession>B2UNF6</accession>
<keyword id="KW-1185">Reference proteome</keyword>
<dbReference type="EMBL" id="CP001071">
    <property type="protein sequence ID" value="ACD04268.1"/>
    <property type="molecule type" value="Genomic_DNA"/>
</dbReference>
<dbReference type="RefSeq" id="WP_012419483.1">
    <property type="nucleotide sequence ID" value="NC_010655.1"/>
</dbReference>
<dbReference type="SMR" id="B2UNF6"/>
<dbReference type="STRING" id="349741.Amuc_0430"/>
<dbReference type="PaxDb" id="349741-Amuc_0430"/>
<dbReference type="KEGG" id="amu:Amuc_0430"/>
<dbReference type="eggNOG" id="COG1058">
    <property type="taxonomic scope" value="Bacteria"/>
</dbReference>
<dbReference type="eggNOG" id="COG1546">
    <property type="taxonomic scope" value="Bacteria"/>
</dbReference>
<dbReference type="HOGENOM" id="CLU_030805_9_2_0"/>
<dbReference type="OrthoDB" id="9801454at2"/>
<dbReference type="Proteomes" id="UP000001031">
    <property type="component" value="Chromosome"/>
</dbReference>
<dbReference type="CDD" id="cd00885">
    <property type="entry name" value="cinA"/>
    <property type="match status" value="1"/>
</dbReference>
<dbReference type="Gene3D" id="3.30.70.2860">
    <property type="match status" value="1"/>
</dbReference>
<dbReference type="Gene3D" id="3.90.950.20">
    <property type="entry name" value="CinA-like"/>
    <property type="match status" value="1"/>
</dbReference>
<dbReference type="Gene3D" id="3.40.980.10">
    <property type="entry name" value="MoaB/Mog-like domain"/>
    <property type="match status" value="1"/>
</dbReference>
<dbReference type="HAMAP" id="MF_00226_B">
    <property type="entry name" value="CinA_B"/>
    <property type="match status" value="1"/>
</dbReference>
<dbReference type="InterPro" id="IPR050101">
    <property type="entry name" value="CinA"/>
</dbReference>
<dbReference type="InterPro" id="IPR036653">
    <property type="entry name" value="CinA-like_C"/>
</dbReference>
<dbReference type="InterPro" id="IPR008136">
    <property type="entry name" value="CinA_C"/>
</dbReference>
<dbReference type="InterPro" id="IPR041424">
    <property type="entry name" value="CinA_KH"/>
</dbReference>
<dbReference type="InterPro" id="IPR008135">
    <property type="entry name" value="Competence-induced_CinA"/>
</dbReference>
<dbReference type="InterPro" id="IPR036425">
    <property type="entry name" value="MoaB/Mog-like_dom_sf"/>
</dbReference>
<dbReference type="InterPro" id="IPR001453">
    <property type="entry name" value="MoaB/Mog_dom"/>
</dbReference>
<dbReference type="NCBIfam" id="TIGR00200">
    <property type="entry name" value="cinA_nterm"/>
    <property type="match status" value="1"/>
</dbReference>
<dbReference type="NCBIfam" id="TIGR00177">
    <property type="entry name" value="molyb_syn"/>
    <property type="match status" value="1"/>
</dbReference>
<dbReference type="NCBIfam" id="TIGR00199">
    <property type="entry name" value="PncC_domain"/>
    <property type="match status" value="1"/>
</dbReference>
<dbReference type="NCBIfam" id="NF001813">
    <property type="entry name" value="PRK00549.1"/>
    <property type="match status" value="1"/>
</dbReference>
<dbReference type="PANTHER" id="PTHR13939">
    <property type="entry name" value="NICOTINAMIDE-NUCLEOTIDE AMIDOHYDROLASE PNCC"/>
    <property type="match status" value="1"/>
</dbReference>
<dbReference type="PANTHER" id="PTHR13939:SF0">
    <property type="entry name" value="NMN AMIDOHYDROLASE-LIKE PROTEIN YFAY"/>
    <property type="match status" value="1"/>
</dbReference>
<dbReference type="Pfam" id="PF02464">
    <property type="entry name" value="CinA"/>
    <property type="match status" value="1"/>
</dbReference>
<dbReference type="Pfam" id="PF18146">
    <property type="entry name" value="CinA_KH"/>
    <property type="match status" value="1"/>
</dbReference>
<dbReference type="Pfam" id="PF00994">
    <property type="entry name" value="MoCF_biosynth"/>
    <property type="match status" value="1"/>
</dbReference>
<dbReference type="PIRSF" id="PIRSF006728">
    <property type="entry name" value="CinA"/>
    <property type="match status" value="1"/>
</dbReference>
<dbReference type="SMART" id="SM00852">
    <property type="entry name" value="MoCF_biosynth"/>
    <property type="match status" value="1"/>
</dbReference>
<dbReference type="SUPFAM" id="SSF142433">
    <property type="entry name" value="CinA-like"/>
    <property type="match status" value="1"/>
</dbReference>
<dbReference type="SUPFAM" id="SSF53218">
    <property type="entry name" value="Molybdenum cofactor biosynthesis proteins"/>
    <property type="match status" value="1"/>
</dbReference>